<name>STBC_PSESM</name>
<reference key="1">
    <citation type="journal article" date="1997" name="FEBS Lett.">
        <title>Avirulence gene D of Pseudomonas syringae pv. tomato may have undergone horizontal gene transfer.</title>
        <authorList>
            <person name="Hanekamp T."/>
            <person name="Kobayashi D."/>
            <person name="Hayes S."/>
            <person name="Stayton M.M."/>
        </authorList>
    </citation>
    <scope>NUCLEOTIDE SEQUENCE [GENOMIC DNA]</scope>
</reference>
<reference key="2">
    <citation type="journal article" date="2003" name="Proc. Natl. Acad. Sci. U.S.A.">
        <title>The complete genome sequence of the Arabidopsis and tomato pathogen Pseudomonas syringae pv. tomato DC3000.</title>
        <authorList>
            <person name="Buell C.R."/>
            <person name="Joardar V."/>
            <person name="Lindeberg M."/>
            <person name="Selengut J."/>
            <person name="Paulsen I.T."/>
            <person name="Gwinn M.L."/>
            <person name="Dodson R.J."/>
            <person name="DeBoy R.T."/>
            <person name="Durkin A.S."/>
            <person name="Kolonay J.F."/>
            <person name="Madupu R."/>
            <person name="Daugherty S.C."/>
            <person name="Brinkac L.M."/>
            <person name="Beanan M.J."/>
            <person name="Haft D.H."/>
            <person name="Nelson W.C."/>
            <person name="Davidsen T.M."/>
            <person name="Zafar N."/>
            <person name="Zhou L."/>
            <person name="Liu J."/>
            <person name="Yuan Q."/>
            <person name="Khouri H.M."/>
            <person name="Fedorova N.B."/>
            <person name="Tran B."/>
            <person name="Russell D."/>
            <person name="Berry K.J."/>
            <person name="Utterback T.R."/>
            <person name="Van Aken S.E."/>
            <person name="Feldblyum T.V."/>
            <person name="D'Ascenzo M."/>
            <person name="Deng W.-L."/>
            <person name="Ramos A.R."/>
            <person name="Alfano J.R."/>
            <person name="Cartinhour S."/>
            <person name="Chatterjee A.K."/>
            <person name="Delaney T.P."/>
            <person name="Lazarowitz S.G."/>
            <person name="Martin G.B."/>
            <person name="Schneider D.J."/>
            <person name="Tang X."/>
            <person name="Bender C.L."/>
            <person name="White O."/>
            <person name="Fraser C.M."/>
            <person name="Collmer A."/>
        </authorList>
    </citation>
    <scope>NUCLEOTIDE SEQUENCE [LARGE SCALE GENOMIC DNA]</scope>
    <source>
        <strain>ATCC BAA-871 / DC3000</strain>
        <plasmid>pDC3000B</plasmid>
    </source>
</reference>
<organism>
    <name type="scientific">Pseudomonas syringae pv. tomato (strain ATCC BAA-871 / DC3000)</name>
    <dbReference type="NCBI Taxonomy" id="223283"/>
    <lineage>
        <taxon>Bacteria</taxon>
        <taxon>Pseudomonadati</taxon>
        <taxon>Pseudomonadota</taxon>
        <taxon>Gammaproteobacteria</taxon>
        <taxon>Pseudomonadales</taxon>
        <taxon>Pseudomonadaceae</taxon>
        <taxon>Pseudomonas</taxon>
    </lineage>
</organism>
<gene>
    <name type="primary">stbC</name>
    <name type="ordered locus">PSPTO_B0019</name>
</gene>
<sequence>MIPLMAKTGNYQVANVNVRNLPDEVHRAIRIQAALHGRSTEAEIRDILERAARPEGRVKLGSFLASIAREVGGLTDKEHTLFENTRITSPARAVSFE</sequence>
<proteinExistence type="predicted"/>
<evidence type="ECO:0000305" key="1"/>
<geneLocation type="plasmid">
    <name>pDC3000B</name>
</geneLocation>
<accession>Q52561</accession>
<comment type="function">
    <text>Involved in plasmid stability.</text>
</comment>
<protein>
    <recommendedName>
        <fullName>Plasmid stability protein StbC</fullName>
    </recommendedName>
</protein>
<feature type="chain" id="PRO_0000072257" description="Plasmid stability protein StbC">
    <location>
        <begin position="1"/>
        <end position="97"/>
    </location>
</feature>
<feature type="sequence conflict" description="In Ref. 1." evidence="1" ref="1">
    <original>MIPLMA</original>
    <variation>MVSKVYSDTTDG</variation>
    <location>
        <begin position="1"/>
        <end position="6"/>
    </location>
</feature>
<feature type="sequence conflict" description="In Ref. 1; AAB81644." evidence="1" ref="1">
    <original>S</original>
    <variation>T</variation>
    <location>
        <position position="39"/>
    </location>
</feature>
<keyword id="KW-0614">Plasmid</keyword>
<keyword id="KW-1185">Reference proteome</keyword>
<dbReference type="EMBL" id="L48985">
    <property type="protein sequence ID" value="AAB81644.1"/>
    <property type="molecule type" value="Genomic_DNA"/>
</dbReference>
<dbReference type="EMBL" id="AE016854">
    <property type="protein sequence ID" value="AAO59110.1"/>
    <property type="molecule type" value="Genomic_DNA"/>
</dbReference>
<dbReference type="RefSeq" id="NP_808607.1">
    <property type="nucleotide sequence ID" value="NC_004632.1"/>
</dbReference>
<dbReference type="SMR" id="Q52561"/>
<dbReference type="KEGG" id="pst:PSPTO_B0019"/>
<dbReference type="PATRIC" id="fig|223283.9.peg.5773"/>
<dbReference type="HOGENOM" id="CLU_168829_4_0_6"/>
<dbReference type="OrthoDB" id="2389872at2"/>
<dbReference type="Proteomes" id="UP000002515">
    <property type="component" value="Plasmid pDC3000B"/>
</dbReference>
<dbReference type="GO" id="GO:0006355">
    <property type="term" value="P:regulation of DNA-templated transcription"/>
    <property type="evidence" value="ECO:0007669"/>
    <property type="project" value="InterPro"/>
</dbReference>
<dbReference type="Gene3D" id="1.10.1220.10">
    <property type="entry name" value="Met repressor-like"/>
    <property type="match status" value="1"/>
</dbReference>
<dbReference type="InterPro" id="IPR013321">
    <property type="entry name" value="Arc_rbn_hlx_hlx"/>
</dbReference>
<dbReference type="InterPro" id="IPR053853">
    <property type="entry name" value="FitA-like_RHH"/>
</dbReference>
<dbReference type="InterPro" id="IPR010985">
    <property type="entry name" value="Ribbon_hlx_hlx"/>
</dbReference>
<dbReference type="Pfam" id="PF22513">
    <property type="entry name" value="FitA-like_RHH"/>
    <property type="match status" value="1"/>
</dbReference>
<dbReference type="SUPFAM" id="SSF47598">
    <property type="entry name" value="Ribbon-helix-helix"/>
    <property type="match status" value="1"/>
</dbReference>